<sequence length="44" mass="5164">MKRTYQPSKLVRKRRHGFRARMATVGGRRVIAARRARGRKRLSA</sequence>
<protein>
    <recommendedName>
        <fullName evidence="1">Large ribosomal subunit protein bL34</fullName>
    </recommendedName>
    <alternativeName>
        <fullName evidence="2">50S ribosomal protein L34</fullName>
    </alternativeName>
</protein>
<keyword id="KW-1185">Reference proteome</keyword>
<keyword id="KW-0687">Ribonucleoprotein</keyword>
<keyword id="KW-0689">Ribosomal protein</keyword>
<comment type="similarity">
    <text evidence="1">Belongs to the bacterial ribosomal protein bL34 family.</text>
</comment>
<organism>
    <name type="scientific">Methylobacterium nodulans (strain LMG 21967 / CNCM I-2342 / ORS 2060)</name>
    <dbReference type="NCBI Taxonomy" id="460265"/>
    <lineage>
        <taxon>Bacteria</taxon>
        <taxon>Pseudomonadati</taxon>
        <taxon>Pseudomonadota</taxon>
        <taxon>Alphaproteobacteria</taxon>
        <taxon>Hyphomicrobiales</taxon>
        <taxon>Methylobacteriaceae</taxon>
        <taxon>Methylobacterium</taxon>
    </lineage>
</organism>
<name>RL34_METNO</name>
<dbReference type="EMBL" id="CP001349">
    <property type="protein sequence ID" value="ACL60220.1"/>
    <property type="molecule type" value="Genomic_DNA"/>
</dbReference>
<dbReference type="RefSeq" id="WP_015931829.1">
    <property type="nucleotide sequence ID" value="NC_011894.1"/>
</dbReference>
<dbReference type="SMR" id="B8IMM7"/>
<dbReference type="STRING" id="460265.Mnod_5375"/>
<dbReference type="KEGG" id="mno:Mnod_5375"/>
<dbReference type="eggNOG" id="COG0230">
    <property type="taxonomic scope" value="Bacteria"/>
</dbReference>
<dbReference type="HOGENOM" id="CLU_129938_2_0_5"/>
<dbReference type="Proteomes" id="UP000008207">
    <property type="component" value="Chromosome"/>
</dbReference>
<dbReference type="GO" id="GO:1990904">
    <property type="term" value="C:ribonucleoprotein complex"/>
    <property type="evidence" value="ECO:0007669"/>
    <property type="project" value="UniProtKB-KW"/>
</dbReference>
<dbReference type="GO" id="GO:0005840">
    <property type="term" value="C:ribosome"/>
    <property type="evidence" value="ECO:0007669"/>
    <property type="project" value="UniProtKB-KW"/>
</dbReference>
<dbReference type="GO" id="GO:0003735">
    <property type="term" value="F:structural constituent of ribosome"/>
    <property type="evidence" value="ECO:0007669"/>
    <property type="project" value="InterPro"/>
</dbReference>
<dbReference type="GO" id="GO:0006412">
    <property type="term" value="P:translation"/>
    <property type="evidence" value="ECO:0007669"/>
    <property type="project" value="UniProtKB-UniRule"/>
</dbReference>
<dbReference type="FunFam" id="1.10.287.3980:FF:000001">
    <property type="entry name" value="Mitochondrial ribosomal protein L34"/>
    <property type="match status" value="1"/>
</dbReference>
<dbReference type="Gene3D" id="1.10.287.3980">
    <property type="match status" value="1"/>
</dbReference>
<dbReference type="HAMAP" id="MF_00391">
    <property type="entry name" value="Ribosomal_bL34"/>
    <property type="match status" value="1"/>
</dbReference>
<dbReference type="InterPro" id="IPR000271">
    <property type="entry name" value="Ribosomal_bL34"/>
</dbReference>
<dbReference type="InterPro" id="IPR020939">
    <property type="entry name" value="Ribosomal_bL34_CS"/>
</dbReference>
<dbReference type="NCBIfam" id="TIGR01030">
    <property type="entry name" value="rpmH_bact"/>
    <property type="match status" value="1"/>
</dbReference>
<dbReference type="PANTHER" id="PTHR14503:SF4">
    <property type="entry name" value="LARGE RIBOSOMAL SUBUNIT PROTEIN BL34M"/>
    <property type="match status" value="1"/>
</dbReference>
<dbReference type="PANTHER" id="PTHR14503">
    <property type="entry name" value="MITOCHONDRIAL RIBOSOMAL PROTEIN 34 FAMILY MEMBER"/>
    <property type="match status" value="1"/>
</dbReference>
<dbReference type="Pfam" id="PF00468">
    <property type="entry name" value="Ribosomal_L34"/>
    <property type="match status" value="1"/>
</dbReference>
<dbReference type="PROSITE" id="PS00784">
    <property type="entry name" value="RIBOSOMAL_L34"/>
    <property type="match status" value="1"/>
</dbReference>
<feature type="chain" id="PRO_1000134449" description="Large ribosomal subunit protein bL34">
    <location>
        <begin position="1"/>
        <end position="44"/>
    </location>
</feature>
<reference key="1">
    <citation type="submission" date="2009-01" db="EMBL/GenBank/DDBJ databases">
        <title>Complete sequence of chromosome of Methylobacterium nodulans ORS 2060.</title>
        <authorList>
            <consortium name="US DOE Joint Genome Institute"/>
            <person name="Lucas S."/>
            <person name="Copeland A."/>
            <person name="Lapidus A."/>
            <person name="Glavina del Rio T."/>
            <person name="Dalin E."/>
            <person name="Tice H."/>
            <person name="Bruce D."/>
            <person name="Goodwin L."/>
            <person name="Pitluck S."/>
            <person name="Sims D."/>
            <person name="Brettin T."/>
            <person name="Detter J.C."/>
            <person name="Han C."/>
            <person name="Larimer F."/>
            <person name="Land M."/>
            <person name="Hauser L."/>
            <person name="Kyrpides N."/>
            <person name="Ivanova N."/>
            <person name="Marx C.J."/>
            <person name="Richardson P."/>
        </authorList>
    </citation>
    <scope>NUCLEOTIDE SEQUENCE [LARGE SCALE GENOMIC DNA]</scope>
    <source>
        <strain>LMG 21967 / CNCM I-2342 / ORS 2060</strain>
    </source>
</reference>
<evidence type="ECO:0000255" key="1">
    <source>
        <dbReference type="HAMAP-Rule" id="MF_00391"/>
    </source>
</evidence>
<evidence type="ECO:0000305" key="2"/>
<gene>
    <name evidence="1" type="primary">rpmH</name>
    <name type="ordered locus">Mnod_5375</name>
</gene>
<accession>B8IMM7</accession>
<proteinExistence type="inferred from homology"/>